<protein>
    <recommendedName>
        <fullName evidence="1">Autonomous glycyl radical cofactor</fullName>
    </recommendedName>
</protein>
<sequence>MIKGIQITQAANDNLLNSFWLLDSEKNEARCLCAKGEFAEDQVVAVSELGQIEYRELPVNVAPTVKVEGGQHLNVNVLRRETLEDAVNNPDKYPQLTIRVSGYAVRFNSLTPEQQRDVITRTFTESL</sequence>
<name>GRCA_HAEIG</name>
<comment type="function">
    <text evidence="1">Acts as a radical domain for damaged PFL and possibly other radical proteins.</text>
</comment>
<reference key="1">
    <citation type="journal article" date="2007" name="Genome Biol.">
        <title>Characterization and modeling of the Haemophilus influenzae core and supragenomes based on the complete genomic sequences of Rd and 12 clinical nontypeable strains.</title>
        <authorList>
            <person name="Hogg J.S."/>
            <person name="Hu F.Z."/>
            <person name="Janto B."/>
            <person name="Boissy R."/>
            <person name="Hayes J."/>
            <person name="Keefe R."/>
            <person name="Post J.C."/>
            <person name="Ehrlich G.D."/>
        </authorList>
    </citation>
    <scope>NUCLEOTIDE SEQUENCE [LARGE SCALE GENOMIC DNA]</scope>
    <source>
        <strain>PittGG</strain>
    </source>
</reference>
<accession>A5UFJ0</accession>
<evidence type="ECO:0000255" key="1">
    <source>
        <dbReference type="HAMAP-Rule" id="MF_00806"/>
    </source>
</evidence>
<keyword id="KW-0556">Organic radical</keyword>
<dbReference type="EMBL" id="CP000672">
    <property type="protein sequence ID" value="ABQ99545.1"/>
    <property type="molecule type" value="Genomic_DNA"/>
</dbReference>
<dbReference type="SMR" id="A5UFJ0"/>
<dbReference type="KEGG" id="hiq:CGSHiGG_02550"/>
<dbReference type="HOGENOM" id="CLU_133780_0_0_6"/>
<dbReference type="Proteomes" id="UP000001990">
    <property type="component" value="Chromosome"/>
</dbReference>
<dbReference type="GO" id="GO:0005829">
    <property type="term" value="C:cytosol"/>
    <property type="evidence" value="ECO:0007669"/>
    <property type="project" value="TreeGrafter"/>
</dbReference>
<dbReference type="GO" id="GO:0008861">
    <property type="term" value="F:formate C-acetyltransferase activity"/>
    <property type="evidence" value="ECO:0007669"/>
    <property type="project" value="TreeGrafter"/>
</dbReference>
<dbReference type="FunFam" id="3.20.70.20:FF:000002">
    <property type="entry name" value="Autonomous glycyl radical cofactor"/>
    <property type="match status" value="1"/>
</dbReference>
<dbReference type="Gene3D" id="3.20.70.20">
    <property type="match status" value="1"/>
</dbReference>
<dbReference type="HAMAP" id="MF_00806">
    <property type="entry name" value="GrcA"/>
    <property type="match status" value="1"/>
</dbReference>
<dbReference type="InterPro" id="IPR050244">
    <property type="entry name" value="Auton_GlycylRad_Cofactor"/>
</dbReference>
<dbReference type="InterPro" id="IPR019777">
    <property type="entry name" value="Form_AcTrfase_GR_CS"/>
</dbReference>
<dbReference type="InterPro" id="IPR001150">
    <property type="entry name" value="Gly_radical"/>
</dbReference>
<dbReference type="InterPro" id="IPR011140">
    <property type="entry name" value="Glycyl_radical_cofactor_GrcA"/>
</dbReference>
<dbReference type="NCBIfam" id="TIGR04365">
    <property type="entry name" value="spare_glycyl"/>
    <property type="match status" value="1"/>
</dbReference>
<dbReference type="PANTHER" id="PTHR30191">
    <property type="entry name" value="FORMATE ACETYLTRANSFERASE"/>
    <property type="match status" value="1"/>
</dbReference>
<dbReference type="PANTHER" id="PTHR30191:SF0">
    <property type="entry name" value="FORMATE ACETYLTRANSFERASE 1"/>
    <property type="match status" value="1"/>
</dbReference>
<dbReference type="Pfam" id="PF01228">
    <property type="entry name" value="Gly_radical"/>
    <property type="match status" value="1"/>
</dbReference>
<dbReference type="PIRSF" id="PIRSF000378">
    <property type="entry name" value="Gly_radicl_yfiD"/>
    <property type="match status" value="1"/>
</dbReference>
<dbReference type="SUPFAM" id="SSF51998">
    <property type="entry name" value="PFL-like glycyl radical enzymes"/>
    <property type="match status" value="1"/>
</dbReference>
<dbReference type="PROSITE" id="PS00850">
    <property type="entry name" value="GLY_RADICAL_1"/>
    <property type="match status" value="1"/>
</dbReference>
<dbReference type="PROSITE" id="PS51149">
    <property type="entry name" value="GLY_RADICAL_2"/>
    <property type="match status" value="1"/>
</dbReference>
<organism>
    <name type="scientific">Haemophilus influenzae (strain PittGG)</name>
    <dbReference type="NCBI Taxonomy" id="374931"/>
    <lineage>
        <taxon>Bacteria</taxon>
        <taxon>Pseudomonadati</taxon>
        <taxon>Pseudomonadota</taxon>
        <taxon>Gammaproteobacteria</taxon>
        <taxon>Pasteurellales</taxon>
        <taxon>Pasteurellaceae</taxon>
        <taxon>Haemophilus</taxon>
    </lineage>
</organism>
<feature type="chain" id="PRO_1000083725" description="Autonomous glycyl radical cofactor">
    <location>
        <begin position="1"/>
        <end position="127"/>
    </location>
</feature>
<feature type="domain" description="Glycine radical" evidence="1">
    <location>
        <begin position="5"/>
        <end position="127"/>
    </location>
</feature>
<feature type="modified residue" description="Glycine radical" evidence="1">
    <location>
        <position position="102"/>
    </location>
</feature>
<proteinExistence type="inferred from homology"/>
<gene>
    <name evidence="1" type="primary">grcA</name>
    <name type="ordered locus">CGSHiGG_02550</name>
</gene>